<reference key="1">
    <citation type="journal article" date="2005" name="Nature">
        <title>The genome of the social amoeba Dictyostelium discoideum.</title>
        <authorList>
            <person name="Eichinger L."/>
            <person name="Pachebat J.A."/>
            <person name="Gloeckner G."/>
            <person name="Rajandream M.A."/>
            <person name="Sucgang R."/>
            <person name="Berriman M."/>
            <person name="Song J."/>
            <person name="Olsen R."/>
            <person name="Szafranski K."/>
            <person name="Xu Q."/>
            <person name="Tunggal B."/>
            <person name="Kummerfeld S."/>
            <person name="Madera M."/>
            <person name="Konfortov B.A."/>
            <person name="Rivero F."/>
            <person name="Bankier A.T."/>
            <person name="Lehmann R."/>
            <person name="Hamlin N."/>
            <person name="Davies R."/>
            <person name="Gaudet P."/>
            <person name="Fey P."/>
            <person name="Pilcher K."/>
            <person name="Chen G."/>
            <person name="Saunders D."/>
            <person name="Sodergren E.J."/>
            <person name="Davis P."/>
            <person name="Kerhornou A."/>
            <person name="Nie X."/>
            <person name="Hall N."/>
            <person name="Anjard C."/>
            <person name="Hemphill L."/>
            <person name="Bason N."/>
            <person name="Farbrother P."/>
            <person name="Desany B."/>
            <person name="Just E."/>
            <person name="Morio T."/>
            <person name="Rost R."/>
            <person name="Churcher C.M."/>
            <person name="Cooper J."/>
            <person name="Haydock S."/>
            <person name="van Driessche N."/>
            <person name="Cronin A."/>
            <person name="Goodhead I."/>
            <person name="Muzny D.M."/>
            <person name="Mourier T."/>
            <person name="Pain A."/>
            <person name="Lu M."/>
            <person name="Harper D."/>
            <person name="Lindsay R."/>
            <person name="Hauser H."/>
            <person name="James K.D."/>
            <person name="Quiles M."/>
            <person name="Madan Babu M."/>
            <person name="Saito T."/>
            <person name="Buchrieser C."/>
            <person name="Wardroper A."/>
            <person name="Felder M."/>
            <person name="Thangavelu M."/>
            <person name="Johnson D."/>
            <person name="Knights A."/>
            <person name="Loulseged H."/>
            <person name="Mungall K.L."/>
            <person name="Oliver K."/>
            <person name="Price C."/>
            <person name="Quail M.A."/>
            <person name="Urushihara H."/>
            <person name="Hernandez J."/>
            <person name="Rabbinowitsch E."/>
            <person name="Steffen D."/>
            <person name="Sanders M."/>
            <person name="Ma J."/>
            <person name="Kohara Y."/>
            <person name="Sharp S."/>
            <person name="Simmonds M.N."/>
            <person name="Spiegler S."/>
            <person name="Tivey A."/>
            <person name="Sugano S."/>
            <person name="White B."/>
            <person name="Walker D."/>
            <person name="Woodward J.R."/>
            <person name="Winckler T."/>
            <person name="Tanaka Y."/>
            <person name="Shaulsky G."/>
            <person name="Schleicher M."/>
            <person name="Weinstock G.M."/>
            <person name="Rosenthal A."/>
            <person name="Cox E.C."/>
            <person name="Chisholm R.L."/>
            <person name="Gibbs R.A."/>
            <person name="Loomis W.F."/>
            <person name="Platzer M."/>
            <person name="Kay R.R."/>
            <person name="Williams J.G."/>
            <person name="Dear P.H."/>
            <person name="Noegel A.A."/>
            <person name="Barrell B.G."/>
            <person name="Kuspa A."/>
        </authorList>
    </citation>
    <scope>NUCLEOTIDE SEQUENCE [LARGE SCALE GENOMIC DNA]</scope>
    <source>
        <strain>AX4</strain>
    </source>
</reference>
<accession>Q54WA4</accession>
<name>RT10_DICDI</name>
<gene>
    <name type="primary">mrps10</name>
    <name type="ORF">DDB_G0279855</name>
</gene>
<feature type="chain" id="PRO_0000345021" description="Small ribosomal subunit protein uS10m">
    <location>
        <begin position="1"/>
        <end position="131"/>
    </location>
</feature>
<proteinExistence type="inferred from homology"/>
<organism>
    <name type="scientific">Dictyostelium discoideum</name>
    <name type="common">Social amoeba</name>
    <dbReference type="NCBI Taxonomy" id="44689"/>
    <lineage>
        <taxon>Eukaryota</taxon>
        <taxon>Amoebozoa</taxon>
        <taxon>Evosea</taxon>
        <taxon>Eumycetozoa</taxon>
        <taxon>Dictyostelia</taxon>
        <taxon>Dictyosteliales</taxon>
        <taxon>Dictyosteliaceae</taxon>
        <taxon>Dictyostelium</taxon>
    </lineage>
</organism>
<protein>
    <recommendedName>
        <fullName evidence="2">Small ribosomal subunit protein uS10m</fullName>
    </recommendedName>
    <alternativeName>
        <fullName evidence="2">28S ribosomal protein S10, mitochondrial</fullName>
        <shortName>MRP-S10</shortName>
        <shortName>S10mt</shortName>
    </alternativeName>
</protein>
<keyword id="KW-0496">Mitochondrion</keyword>
<keyword id="KW-1185">Reference proteome</keyword>
<keyword id="KW-0687">Ribonucleoprotein</keyword>
<keyword id="KW-0689">Ribosomal protein</keyword>
<evidence type="ECO:0000250" key="1"/>
<evidence type="ECO:0000305" key="2"/>
<sequence length="131" mass="14797">MSVSQTIVGNGRKIVSFNLQGIDKVLPYIAKRIAWAAKLSGIKTVGPLPLPSTSRQWTVNKSPHTDKHSRDQYEMKVNKRLVQIDAPVQTADMFVKFVQTKLPPISATVDIKIEERVYLPTEDFYSDKRIA</sequence>
<dbReference type="EMBL" id="AAFI02000033">
    <property type="protein sequence ID" value="EAL67541.1"/>
    <property type="molecule type" value="Genomic_DNA"/>
</dbReference>
<dbReference type="RefSeq" id="XP_641488.1">
    <property type="nucleotide sequence ID" value="XM_636396.1"/>
</dbReference>
<dbReference type="SMR" id="Q54WA4"/>
<dbReference type="FunCoup" id="Q54WA4">
    <property type="interactions" value="112"/>
</dbReference>
<dbReference type="STRING" id="44689.Q54WA4"/>
<dbReference type="PaxDb" id="44689-DDB0266863"/>
<dbReference type="EnsemblProtists" id="EAL67541">
    <property type="protein sequence ID" value="EAL67541"/>
    <property type="gene ID" value="DDB_G0279855"/>
</dbReference>
<dbReference type="GeneID" id="8622228"/>
<dbReference type="KEGG" id="ddi:DDB_G0279855"/>
<dbReference type="dictyBase" id="DDB_G0279855">
    <property type="gene designation" value="mrps10"/>
</dbReference>
<dbReference type="VEuPathDB" id="AmoebaDB:DDB_G0279855"/>
<dbReference type="eggNOG" id="ENOG502RHFQ">
    <property type="taxonomic scope" value="Eukaryota"/>
</dbReference>
<dbReference type="HOGENOM" id="CLU_1931474_0_0_1"/>
<dbReference type="InParanoid" id="Q54WA4"/>
<dbReference type="OMA" id="RIAWAAK"/>
<dbReference type="PhylomeDB" id="Q54WA4"/>
<dbReference type="PRO" id="PR:Q54WA4"/>
<dbReference type="Proteomes" id="UP000002195">
    <property type="component" value="Chromosome 3"/>
</dbReference>
<dbReference type="GO" id="GO:0005739">
    <property type="term" value="C:mitochondrion"/>
    <property type="evidence" value="ECO:0000318"/>
    <property type="project" value="GO_Central"/>
</dbReference>
<dbReference type="GO" id="GO:0015935">
    <property type="term" value="C:small ribosomal subunit"/>
    <property type="evidence" value="ECO:0000318"/>
    <property type="project" value="GO_Central"/>
</dbReference>
<dbReference type="GO" id="GO:0003735">
    <property type="term" value="F:structural constituent of ribosome"/>
    <property type="evidence" value="ECO:0000318"/>
    <property type="project" value="GO_Central"/>
</dbReference>
<dbReference type="GO" id="GO:0006412">
    <property type="term" value="P:translation"/>
    <property type="evidence" value="ECO:0007669"/>
    <property type="project" value="InterPro"/>
</dbReference>
<dbReference type="FunFam" id="3.30.70.600:FF:000016">
    <property type="entry name" value="Probable 28S ribosomal protein S10, mitochondrial"/>
    <property type="match status" value="1"/>
</dbReference>
<dbReference type="Gene3D" id="3.30.70.600">
    <property type="entry name" value="Ribosomal protein S10 domain"/>
    <property type="match status" value="1"/>
</dbReference>
<dbReference type="HAMAP" id="MF_00508">
    <property type="entry name" value="Ribosomal_uS10"/>
    <property type="match status" value="1"/>
</dbReference>
<dbReference type="InterPro" id="IPR001848">
    <property type="entry name" value="Ribosomal_uS10"/>
</dbReference>
<dbReference type="InterPro" id="IPR027486">
    <property type="entry name" value="Ribosomal_uS10_dom"/>
</dbReference>
<dbReference type="InterPro" id="IPR036838">
    <property type="entry name" value="Ribosomal_uS10_dom_sf"/>
</dbReference>
<dbReference type="PANTHER" id="PTHR11700">
    <property type="entry name" value="30S RIBOSOMAL PROTEIN S10 FAMILY MEMBER"/>
    <property type="match status" value="1"/>
</dbReference>
<dbReference type="Pfam" id="PF00338">
    <property type="entry name" value="Ribosomal_S10"/>
    <property type="match status" value="1"/>
</dbReference>
<dbReference type="PRINTS" id="PR00971">
    <property type="entry name" value="RIBOSOMALS10"/>
</dbReference>
<dbReference type="SMART" id="SM01403">
    <property type="entry name" value="Ribosomal_S10"/>
    <property type="match status" value="1"/>
</dbReference>
<dbReference type="SUPFAM" id="SSF54999">
    <property type="entry name" value="Ribosomal protein S10"/>
    <property type="match status" value="1"/>
</dbReference>
<comment type="subcellular location">
    <subcellularLocation>
        <location evidence="1">Mitochondrion</location>
    </subcellularLocation>
</comment>
<comment type="similarity">
    <text evidence="2">Belongs to the universal ribosomal protein uS10 family.</text>
</comment>